<dbReference type="EC" id="2.7.11.1" evidence="1"/>
<dbReference type="EMBL" id="AF034567">
    <property type="protein sequence ID" value="AAC29509.1"/>
    <property type="molecule type" value="Genomic_DNA"/>
</dbReference>
<dbReference type="SMR" id="O50231"/>
<dbReference type="PATRIC" id="fig|1402.64.peg.3700"/>
<dbReference type="GO" id="GO:0005524">
    <property type="term" value="F:ATP binding"/>
    <property type="evidence" value="ECO:0007669"/>
    <property type="project" value="UniProtKB-KW"/>
</dbReference>
<dbReference type="GO" id="GO:0106310">
    <property type="term" value="F:protein serine kinase activity"/>
    <property type="evidence" value="ECO:0007669"/>
    <property type="project" value="RHEA"/>
</dbReference>
<dbReference type="GO" id="GO:0004674">
    <property type="term" value="F:protein serine/threonine kinase activity"/>
    <property type="evidence" value="ECO:0007669"/>
    <property type="project" value="UniProtKB-KW"/>
</dbReference>
<dbReference type="GO" id="GO:0016989">
    <property type="term" value="F:sigma factor antagonist activity"/>
    <property type="evidence" value="ECO:0007669"/>
    <property type="project" value="InterPro"/>
</dbReference>
<dbReference type="CDD" id="cd16936">
    <property type="entry name" value="HATPase_RsbW-like"/>
    <property type="match status" value="1"/>
</dbReference>
<dbReference type="Gene3D" id="3.30.565.10">
    <property type="entry name" value="Histidine kinase-like ATPase, C-terminal domain"/>
    <property type="match status" value="1"/>
</dbReference>
<dbReference type="HAMAP" id="MF_00638">
    <property type="entry name" value="Anti_sigma_B"/>
    <property type="match status" value="1"/>
</dbReference>
<dbReference type="InterPro" id="IPR050267">
    <property type="entry name" value="Anti-sigma-factor_SerPK"/>
</dbReference>
<dbReference type="InterPro" id="IPR036890">
    <property type="entry name" value="HATPase_C_sf"/>
</dbReference>
<dbReference type="InterPro" id="IPR010193">
    <property type="entry name" value="RsbW"/>
</dbReference>
<dbReference type="NCBIfam" id="NF003144">
    <property type="entry name" value="PRK04069.1"/>
    <property type="match status" value="1"/>
</dbReference>
<dbReference type="NCBIfam" id="TIGR01924">
    <property type="entry name" value="rsbW_low_gc"/>
    <property type="match status" value="1"/>
</dbReference>
<dbReference type="PANTHER" id="PTHR35526">
    <property type="entry name" value="ANTI-SIGMA-F FACTOR RSBW-RELATED"/>
    <property type="match status" value="1"/>
</dbReference>
<dbReference type="PANTHER" id="PTHR35526:SF9">
    <property type="entry name" value="SERINE-PROTEIN KINASE RSBW"/>
    <property type="match status" value="1"/>
</dbReference>
<dbReference type="Pfam" id="PF13581">
    <property type="entry name" value="HATPase_c_2"/>
    <property type="match status" value="1"/>
</dbReference>
<dbReference type="SUPFAM" id="SSF55874">
    <property type="entry name" value="ATPase domain of HSP90 chaperone/DNA topoisomerase II/histidine kinase"/>
    <property type="match status" value="1"/>
</dbReference>
<name>RSBW_BACLI</name>
<gene>
    <name evidence="1" type="primary">rsbW</name>
</gene>
<proteinExistence type="inferred from homology"/>
<comment type="function">
    <text evidence="1">Negative regulator of sigma-B activity. Phosphorylates and inactivates its specific antagonist protein, RsbV. Upon phosphorylation of RsbV, RsbW is released and binds to sigma-B, thereby blocking its ability to form an RNA polymerase holoenzyme (E-sigma-B).</text>
</comment>
<comment type="catalytic activity">
    <reaction evidence="1">
        <text>L-seryl-[protein] + ATP = O-phospho-L-seryl-[protein] + ADP + H(+)</text>
        <dbReference type="Rhea" id="RHEA:17989"/>
        <dbReference type="Rhea" id="RHEA-COMP:9863"/>
        <dbReference type="Rhea" id="RHEA-COMP:11604"/>
        <dbReference type="ChEBI" id="CHEBI:15378"/>
        <dbReference type="ChEBI" id="CHEBI:29999"/>
        <dbReference type="ChEBI" id="CHEBI:30616"/>
        <dbReference type="ChEBI" id="CHEBI:83421"/>
        <dbReference type="ChEBI" id="CHEBI:456216"/>
        <dbReference type="EC" id="2.7.11.1"/>
    </reaction>
</comment>
<comment type="catalytic activity">
    <reaction evidence="1">
        <text>L-threonyl-[protein] + ATP = O-phospho-L-threonyl-[protein] + ADP + H(+)</text>
        <dbReference type="Rhea" id="RHEA:46608"/>
        <dbReference type="Rhea" id="RHEA-COMP:11060"/>
        <dbReference type="Rhea" id="RHEA-COMP:11605"/>
        <dbReference type="ChEBI" id="CHEBI:15378"/>
        <dbReference type="ChEBI" id="CHEBI:30013"/>
        <dbReference type="ChEBI" id="CHEBI:30616"/>
        <dbReference type="ChEBI" id="CHEBI:61977"/>
        <dbReference type="ChEBI" id="CHEBI:456216"/>
        <dbReference type="EC" id="2.7.11.1"/>
    </reaction>
</comment>
<comment type="similarity">
    <text evidence="1">Belongs to the anti-sigma-factor family.</text>
</comment>
<reference key="1">
    <citation type="journal article" date="1998" name="Gene">
        <title>Bacillus licheniformis sigB operon encoding the general stress transcription factor sigmaB.</title>
        <authorList>
            <person name="Brody M.S."/>
            <person name="Price C.W."/>
        </authorList>
    </citation>
    <scope>NUCLEOTIDE SEQUENCE [GENOMIC DNA]</scope>
    <source>
        <strain>FD50</strain>
    </source>
</reference>
<protein>
    <recommendedName>
        <fullName evidence="1">Serine-protein kinase RsbW</fullName>
        <ecNumber evidence="1">2.7.11.1</ecNumber>
    </recommendedName>
    <alternativeName>
        <fullName evidence="1">Anti-sigma-B factor</fullName>
    </alternativeName>
    <alternativeName>
        <fullName evidence="1">Sigma-B negative effector RsbW</fullName>
    </alternativeName>
</protein>
<accession>O50231</accession>
<feature type="chain" id="PRO_0000203530" description="Serine-protein kinase RsbW">
    <location>
        <begin position="1"/>
        <end position="160"/>
    </location>
</feature>
<sequence>MKRAADYIEMKSPAKPEYVGIIRLTLSGIASKMGYSYDDIEDLKIAVSEACTNAVQHAYKADKTGEVSVRFGVFEDRLEIIVADQGDSFDIHDKQKGLGPYSPEHTVDQLSEGGLGLYLMETLMDEVRVQIDSGVTVSMTKFLNRERVDDGTTVQNYETN</sequence>
<organism>
    <name type="scientific">Bacillus licheniformis</name>
    <dbReference type="NCBI Taxonomy" id="1402"/>
    <lineage>
        <taxon>Bacteria</taxon>
        <taxon>Bacillati</taxon>
        <taxon>Bacillota</taxon>
        <taxon>Bacilli</taxon>
        <taxon>Bacillales</taxon>
        <taxon>Bacillaceae</taxon>
        <taxon>Bacillus</taxon>
    </lineage>
</organism>
<evidence type="ECO:0000255" key="1">
    <source>
        <dbReference type="HAMAP-Rule" id="MF_00638"/>
    </source>
</evidence>
<keyword id="KW-0067">ATP-binding</keyword>
<keyword id="KW-0418">Kinase</keyword>
<keyword id="KW-0547">Nucleotide-binding</keyword>
<keyword id="KW-0723">Serine/threonine-protein kinase</keyword>
<keyword id="KW-0808">Transferase</keyword>